<sequence>MTVASQSIEEFKECLYHMQETRKLLTMQLLATGKITSAEIQILKRTLEEMQDERTTDFYIRHIHSRGATFAINIRDEILGLKKDFLFLENFASECESEESFTNRLKLCDLPGLLSNNQIDIRLMNGFAEEVAKCKEFLMDLITIESDGIKPLFITDWDGTMKDYCSQYATNLQPAYSAIVMGVFARNFTRAFAVLTAGPLRHPGILDLTSLPIDGPVMFSGSWGREWWLGGRRVVHDDGIPEEGSVAIGQLYEQLEEILHEGEFVQFALVGSGVQKKVDRLTLGVQTVFGQVPKELSAKYIDAVKERIHRVDPNSQYLILENCSPLEIEVCVHSSGAIWNKGDGVAALVEFNKDSLKLGKVCVAGDTTSDLPMLQKAAQENPTQVRALFVNVNKEIQSTINKIVGDSSRTCFISCPDVAHAAFAQIIIELTQNA</sequence>
<keyword id="KW-0378">Hydrolase</keyword>
<keyword id="KW-0460">Magnesium</keyword>
<keyword id="KW-0479">Metal-binding</keyword>
<keyword id="KW-1185">Reference proteome</keyword>
<proteinExistence type="inferred from homology"/>
<comment type="function">
    <text evidence="2">Catalyzes the hydrolysis of trehalose 6-phosphate to trehalose and phosphate; prevents the accumulation of toxic levels of trehalose 6-phosphate.</text>
</comment>
<comment type="catalytic activity">
    <reaction evidence="2">
        <text>alpha,alpha-trehalose 6-phosphate + H2O = alpha,alpha-trehalose + phosphate</text>
        <dbReference type="Rhea" id="RHEA:23420"/>
        <dbReference type="ChEBI" id="CHEBI:15377"/>
        <dbReference type="ChEBI" id="CHEBI:16551"/>
        <dbReference type="ChEBI" id="CHEBI:43474"/>
        <dbReference type="ChEBI" id="CHEBI:58429"/>
        <dbReference type="EC" id="3.1.3.12"/>
    </reaction>
</comment>
<comment type="cofactor">
    <cofactor evidence="1">
        <name>Mg(2+)</name>
        <dbReference type="ChEBI" id="CHEBI:18420"/>
    </cofactor>
    <text evidence="1">Binds 1 Mg(2+) ion per subunit.</text>
</comment>
<comment type="similarity">
    <text evidence="3">Belongs to the gob-1 trehalose phosphatase family.</text>
</comment>
<gene>
    <name type="primary">gob-1</name>
    <name type="ORF">CBG07712</name>
</gene>
<feature type="chain" id="PRO_0000385171" description="Trehalose-phosphatase">
    <location>
        <begin position="1"/>
        <end position="434"/>
    </location>
</feature>
<feature type="active site" description="Proton donor/acceptor" evidence="1">
    <location>
        <position position="158"/>
    </location>
</feature>
<feature type="binding site" evidence="1">
    <location>
        <position position="156"/>
    </location>
    <ligand>
        <name>Mg(2+)</name>
        <dbReference type="ChEBI" id="CHEBI:18420"/>
    </ligand>
</feature>
<feature type="binding site" evidence="1">
    <location>
        <position position="158"/>
    </location>
    <ligand>
        <name>Mg(2+)</name>
        <dbReference type="ChEBI" id="CHEBI:18420"/>
    </ligand>
</feature>
<feature type="binding site" evidence="1">
    <location>
        <begin position="275"/>
        <end position="277"/>
    </location>
    <ligand>
        <name>substrate</name>
    </ligand>
</feature>
<feature type="binding site" evidence="1">
    <location>
        <position position="366"/>
    </location>
    <ligand>
        <name>Mg(2+)</name>
        <dbReference type="ChEBI" id="CHEBI:18420"/>
    </ligand>
</feature>
<organism>
    <name type="scientific">Caenorhabditis briggsae</name>
    <dbReference type="NCBI Taxonomy" id="6238"/>
    <lineage>
        <taxon>Eukaryota</taxon>
        <taxon>Metazoa</taxon>
        <taxon>Ecdysozoa</taxon>
        <taxon>Nematoda</taxon>
        <taxon>Chromadorea</taxon>
        <taxon>Rhabditida</taxon>
        <taxon>Rhabditina</taxon>
        <taxon>Rhabditomorpha</taxon>
        <taxon>Rhabditoidea</taxon>
        <taxon>Rhabditidae</taxon>
        <taxon>Peloderinae</taxon>
        <taxon>Caenorhabditis</taxon>
    </lineage>
</organism>
<name>GOB1_CAEBR</name>
<evidence type="ECO:0000250" key="1">
    <source>
        <dbReference type="UniProtKB" id="A8NS89"/>
    </source>
</evidence>
<evidence type="ECO:0000250" key="2">
    <source>
        <dbReference type="UniProtKB" id="Q9XTQ5"/>
    </source>
</evidence>
<evidence type="ECO:0000305" key="3"/>
<dbReference type="EC" id="3.1.3.12" evidence="2"/>
<dbReference type="EMBL" id="HE601041">
    <property type="protein sequence ID" value="CAP27445.1"/>
    <property type="molecule type" value="Genomic_DNA"/>
</dbReference>
<dbReference type="SMR" id="A8X485"/>
<dbReference type="FunCoup" id="A8X485">
    <property type="interactions" value="231"/>
</dbReference>
<dbReference type="STRING" id="6238.A8X485"/>
<dbReference type="KEGG" id="cbr:CBG_07712"/>
<dbReference type="CTD" id="8587944"/>
<dbReference type="WormBase" id="CBG07712">
    <property type="protein sequence ID" value="CBP39651"/>
    <property type="gene ID" value="WBGene00029675"/>
    <property type="gene designation" value="Cbr-gob-1"/>
</dbReference>
<dbReference type="eggNOG" id="ENOG502RY87">
    <property type="taxonomic scope" value="Eukaryota"/>
</dbReference>
<dbReference type="HOGENOM" id="CLU_033472_0_0_1"/>
<dbReference type="InParanoid" id="A8X485"/>
<dbReference type="OMA" id="YCGRYRS"/>
<dbReference type="Proteomes" id="UP000008549">
    <property type="component" value="Unassembled WGS sequence"/>
</dbReference>
<dbReference type="GO" id="GO:0046872">
    <property type="term" value="F:metal ion binding"/>
    <property type="evidence" value="ECO:0007669"/>
    <property type="project" value="UniProtKB-KW"/>
</dbReference>
<dbReference type="GO" id="GO:0004805">
    <property type="term" value="F:trehalose-phosphatase activity"/>
    <property type="evidence" value="ECO:0000250"/>
    <property type="project" value="UniProtKB"/>
</dbReference>
<dbReference type="GO" id="GO:1901136">
    <property type="term" value="P:carbohydrate derivative catabolic process"/>
    <property type="evidence" value="ECO:0000250"/>
    <property type="project" value="UniProtKB"/>
</dbReference>
<dbReference type="GO" id="GO:0016311">
    <property type="term" value="P:dephosphorylation"/>
    <property type="evidence" value="ECO:0000250"/>
    <property type="project" value="UniProtKB"/>
</dbReference>
<dbReference type="FunFam" id="1.20.58.1800:FF:000003">
    <property type="entry name" value="Trehalose-phosphatase"/>
    <property type="match status" value="1"/>
</dbReference>
<dbReference type="Gene3D" id="1.20.58.1800">
    <property type="match status" value="1"/>
</dbReference>
<dbReference type="Gene3D" id="3.30.70.3080">
    <property type="match status" value="1"/>
</dbReference>
<dbReference type="Gene3D" id="3.40.50.1000">
    <property type="entry name" value="HAD superfamily/HAD-like"/>
    <property type="match status" value="1"/>
</dbReference>
<dbReference type="InterPro" id="IPR036412">
    <property type="entry name" value="HAD-like_sf"/>
</dbReference>
<dbReference type="InterPro" id="IPR023214">
    <property type="entry name" value="HAD_sf"/>
</dbReference>
<dbReference type="InterPro" id="IPR049063">
    <property type="entry name" value="T6PP_C"/>
</dbReference>
<dbReference type="InterPro" id="IPR041064">
    <property type="entry name" value="T6PP_helical"/>
</dbReference>
<dbReference type="Pfam" id="PF21141">
    <property type="entry name" value="T6PP_C"/>
    <property type="match status" value="1"/>
</dbReference>
<dbReference type="Pfam" id="PF18572">
    <property type="entry name" value="T6PP_N"/>
    <property type="match status" value="1"/>
</dbReference>
<dbReference type="SUPFAM" id="SSF56784">
    <property type="entry name" value="HAD-like"/>
    <property type="match status" value="1"/>
</dbReference>
<accession>A8X485</accession>
<reference key="1">
    <citation type="journal article" date="2003" name="PLoS Biol.">
        <title>The genome sequence of Caenorhabditis briggsae: a platform for comparative genomics.</title>
        <authorList>
            <person name="Stein L.D."/>
            <person name="Bao Z."/>
            <person name="Blasiar D."/>
            <person name="Blumenthal T."/>
            <person name="Brent M.R."/>
            <person name="Chen N."/>
            <person name="Chinwalla A."/>
            <person name="Clarke L."/>
            <person name="Clee C."/>
            <person name="Coghlan A."/>
            <person name="Coulson A."/>
            <person name="D'Eustachio P."/>
            <person name="Fitch D.H.A."/>
            <person name="Fulton L.A."/>
            <person name="Fulton R.E."/>
            <person name="Griffiths-Jones S."/>
            <person name="Harris T.W."/>
            <person name="Hillier L.W."/>
            <person name="Kamath R."/>
            <person name="Kuwabara P.E."/>
            <person name="Mardis E.R."/>
            <person name="Marra M.A."/>
            <person name="Miner T.L."/>
            <person name="Minx P."/>
            <person name="Mullikin J.C."/>
            <person name="Plumb R.W."/>
            <person name="Rogers J."/>
            <person name="Schein J.E."/>
            <person name="Sohrmann M."/>
            <person name="Spieth J."/>
            <person name="Stajich J.E."/>
            <person name="Wei C."/>
            <person name="Willey D."/>
            <person name="Wilson R.K."/>
            <person name="Durbin R.M."/>
            <person name="Waterston R.H."/>
        </authorList>
    </citation>
    <scope>NUCLEOTIDE SEQUENCE [LARGE SCALE GENOMIC DNA]</scope>
    <source>
        <strain>AF16</strain>
    </source>
</reference>
<protein>
    <recommendedName>
        <fullName>Trehalose-phosphatase</fullName>
        <ecNumber evidence="2">3.1.3.12</ecNumber>
    </recommendedName>
    <alternativeName>
        <fullName>Trehalose-6-phosphate phosphatase</fullName>
        <shortName>TPP</shortName>
    </alternativeName>
</protein>